<organism>
    <name type="scientific">Idiomarina loihiensis (strain ATCC BAA-735 / DSM 15497 / L2-TR)</name>
    <dbReference type="NCBI Taxonomy" id="283942"/>
    <lineage>
        <taxon>Bacteria</taxon>
        <taxon>Pseudomonadati</taxon>
        <taxon>Pseudomonadota</taxon>
        <taxon>Gammaproteobacteria</taxon>
        <taxon>Alteromonadales</taxon>
        <taxon>Idiomarinaceae</taxon>
        <taxon>Idiomarina</taxon>
    </lineage>
</organism>
<dbReference type="EC" id="6.2.1.5" evidence="1"/>
<dbReference type="EMBL" id="AE017340">
    <property type="protein sequence ID" value="AAV82339.1"/>
    <property type="molecule type" value="Genomic_DNA"/>
</dbReference>
<dbReference type="RefSeq" id="WP_011234744.1">
    <property type="nucleotide sequence ID" value="NC_006512.1"/>
</dbReference>
<dbReference type="SMR" id="Q5QU21"/>
<dbReference type="STRING" id="283942.IL1501"/>
<dbReference type="GeneID" id="41336678"/>
<dbReference type="KEGG" id="ilo:IL1501"/>
<dbReference type="eggNOG" id="COG0045">
    <property type="taxonomic scope" value="Bacteria"/>
</dbReference>
<dbReference type="HOGENOM" id="CLU_037430_0_2_6"/>
<dbReference type="OrthoDB" id="9802602at2"/>
<dbReference type="UniPathway" id="UPA00223">
    <property type="reaction ID" value="UER00999"/>
</dbReference>
<dbReference type="Proteomes" id="UP000001171">
    <property type="component" value="Chromosome"/>
</dbReference>
<dbReference type="GO" id="GO:0005829">
    <property type="term" value="C:cytosol"/>
    <property type="evidence" value="ECO:0007669"/>
    <property type="project" value="TreeGrafter"/>
</dbReference>
<dbReference type="GO" id="GO:0042709">
    <property type="term" value="C:succinate-CoA ligase complex"/>
    <property type="evidence" value="ECO:0007669"/>
    <property type="project" value="TreeGrafter"/>
</dbReference>
<dbReference type="GO" id="GO:0005524">
    <property type="term" value="F:ATP binding"/>
    <property type="evidence" value="ECO:0007669"/>
    <property type="project" value="UniProtKB-UniRule"/>
</dbReference>
<dbReference type="GO" id="GO:0000287">
    <property type="term" value="F:magnesium ion binding"/>
    <property type="evidence" value="ECO:0007669"/>
    <property type="project" value="UniProtKB-UniRule"/>
</dbReference>
<dbReference type="GO" id="GO:0004775">
    <property type="term" value="F:succinate-CoA ligase (ADP-forming) activity"/>
    <property type="evidence" value="ECO:0007669"/>
    <property type="project" value="UniProtKB-UniRule"/>
</dbReference>
<dbReference type="GO" id="GO:0004776">
    <property type="term" value="F:succinate-CoA ligase (GDP-forming) activity"/>
    <property type="evidence" value="ECO:0007669"/>
    <property type="project" value="RHEA"/>
</dbReference>
<dbReference type="GO" id="GO:0006104">
    <property type="term" value="P:succinyl-CoA metabolic process"/>
    <property type="evidence" value="ECO:0007669"/>
    <property type="project" value="TreeGrafter"/>
</dbReference>
<dbReference type="GO" id="GO:0006099">
    <property type="term" value="P:tricarboxylic acid cycle"/>
    <property type="evidence" value="ECO:0007669"/>
    <property type="project" value="UniProtKB-UniRule"/>
</dbReference>
<dbReference type="FunFam" id="3.30.1490.20:FF:000002">
    <property type="entry name" value="Succinate--CoA ligase [ADP-forming] subunit beta"/>
    <property type="match status" value="1"/>
</dbReference>
<dbReference type="FunFam" id="3.30.470.20:FF:000002">
    <property type="entry name" value="Succinate--CoA ligase [ADP-forming] subunit beta"/>
    <property type="match status" value="1"/>
</dbReference>
<dbReference type="FunFam" id="3.40.50.261:FF:000001">
    <property type="entry name" value="Succinate--CoA ligase [ADP-forming] subunit beta"/>
    <property type="match status" value="1"/>
</dbReference>
<dbReference type="Gene3D" id="3.30.1490.20">
    <property type="entry name" value="ATP-grasp fold, A domain"/>
    <property type="match status" value="1"/>
</dbReference>
<dbReference type="Gene3D" id="3.30.470.20">
    <property type="entry name" value="ATP-grasp fold, B domain"/>
    <property type="match status" value="1"/>
</dbReference>
<dbReference type="Gene3D" id="3.40.50.261">
    <property type="entry name" value="Succinyl-CoA synthetase domains"/>
    <property type="match status" value="1"/>
</dbReference>
<dbReference type="HAMAP" id="MF_00558">
    <property type="entry name" value="Succ_CoA_beta"/>
    <property type="match status" value="1"/>
</dbReference>
<dbReference type="InterPro" id="IPR011761">
    <property type="entry name" value="ATP-grasp"/>
</dbReference>
<dbReference type="InterPro" id="IPR013650">
    <property type="entry name" value="ATP-grasp_succ-CoA_synth-type"/>
</dbReference>
<dbReference type="InterPro" id="IPR013815">
    <property type="entry name" value="ATP_grasp_subdomain_1"/>
</dbReference>
<dbReference type="InterPro" id="IPR017866">
    <property type="entry name" value="Succ-CoA_synthase_bsu_CS"/>
</dbReference>
<dbReference type="InterPro" id="IPR005811">
    <property type="entry name" value="SUCC_ACL_C"/>
</dbReference>
<dbReference type="InterPro" id="IPR005809">
    <property type="entry name" value="Succ_CoA_ligase-like_bsu"/>
</dbReference>
<dbReference type="InterPro" id="IPR016102">
    <property type="entry name" value="Succinyl-CoA_synth-like"/>
</dbReference>
<dbReference type="NCBIfam" id="NF001913">
    <property type="entry name" value="PRK00696.1"/>
    <property type="match status" value="1"/>
</dbReference>
<dbReference type="NCBIfam" id="TIGR01016">
    <property type="entry name" value="sucCoAbeta"/>
    <property type="match status" value="1"/>
</dbReference>
<dbReference type="PANTHER" id="PTHR11815:SF10">
    <property type="entry name" value="SUCCINATE--COA LIGASE [GDP-FORMING] SUBUNIT BETA, MITOCHONDRIAL"/>
    <property type="match status" value="1"/>
</dbReference>
<dbReference type="PANTHER" id="PTHR11815">
    <property type="entry name" value="SUCCINYL-COA SYNTHETASE BETA CHAIN"/>
    <property type="match status" value="1"/>
</dbReference>
<dbReference type="Pfam" id="PF08442">
    <property type="entry name" value="ATP-grasp_2"/>
    <property type="match status" value="1"/>
</dbReference>
<dbReference type="Pfam" id="PF00549">
    <property type="entry name" value="Ligase_CoA"/>
    <property type="match status" value="1"/>
</dbReference>
<dbReference type="PIRSF" id="PIRSF001554">
    <property type="entry name" value="SucCS_beta"/>
    <property type="match status" value="1"/>
</dbReference>
<dbReference type="SUPFAM" id="SSF56059">
    <property type="entry name" value="Glutathione synthetase ATP-binding domain-like"/>
    <property type="match status" value="1"/>
</dbReference>
<dbReference type="SUPFAM" id="SSF52210">
    <property type="entry name" value="Succinyl-CoA synthetase domains"/>
    <property type="match status" value="1"/>
</dbReference>
<dbReference type="PROSITE" id="PS50975">
    <property type="entry name" value="ATP_GRASP"/>
    <property type="match status" value="1"/>
</dbReference>
<dbReference type="PROSITE" id="PS01217">
    <property type="entry name" value="SUCCINYL_COA_LIG_3"/>
    <property type="match status" value="1"/>
</dbReference>
<gene>
    <name evidence="1" type="primary">sucC</name>
    <name type="ordered locus">IL1501</name>
</gene>
<sequence>MNLHEYQGKQLFKEFGLPVSEGYACDTADEAVEAAKRIGGDIWVVKCQVHAGGRGKAGGVKLVKSLDDVRAFAEQWLGKNLVTFQTDEKGQPVAKILVESCTDIADELYLGAVVDRASRKIVFMASTEGGVEIETVAEETPEKILKAEIDPTVGAQPYQGRELGFKLGLTPDQVKQFTKVFMGLAKMFEQYDLALLEINPLVITDEGNVHCLDAKVGIDSNALYRQPKIREMHDPSQDDAREAEAAKWELNYVALDGNIGCMVNGAGLAMGTMDIVKLSGGEPANFLDVGGGATKERVSEAFKIILSDSSVKAVLVNIFGGIVRCDMIAEGIIGAVEEVGVKVPVIVRLEGNNAELGTQKLNESGLNIIAAESLSDAADKVVAAAGGQ</sequence>
<proteinExistence type="inferred from homology"/>
<reference key="1">
    <citation type="journal article" date="2004" name="Proc. Natl. Acad. Sci. U.S.A.">
        <title>Genome sequence of the deep-sea gamma-proteobacterium Idiomarina loihiensis reveals amino acid fermentation as a source of carbon and energy.</title>
        <authorList>
            <person name="Hou S."/>
            <person name="Saw J.H."/>
            <person name="Lee K.S."/>
            <person name="Freitas T.A."/>
            <person name="Belisle C."/>
            <person name="Kawarabayasi Y."/>
            <person name="Donachie S.P."/>
            <person name="Pikina A."/>
            <person name="Galperin M.Y."/>
            <person name="Koonin E.V."/>
            <person name="Makarova K.S."/>
            <person name="Omelchenko M.V."/>
            <person name="Sorokin A."/>
            <person name="Wolf Y.I."/>
            <person name="Li Q.X."/>
            <person name="Keum Y.S."/>
            <person name="Campbell S."/>
            <person name="Denery J."/>
            <person name="Aizawa S."/>
            <person name="Shibata S."/>
            <person name="Malahoff A."/>
            <person name="Alam M."/>
        </authorList>
    </citation>
    <scope>NUCLEOTIDE SEQUENCE [LARGE SCALE GENOMIC DNA]</scope>
    <source>
        <strain>ATCC BAA-735 / DSM 15497 / L2-TR</strain>
    </source>
</reference>
<feature type="chain" id="PRO_1000082107" description="Succinate--CoA ligase [ADP-forming] subunit beta">
    <location>
        <begin position="1"/>
        <end position="388"/>
    </location>
</feature>
<feature type="domain" description="ATP-grasp" evidence="1">
    <location>
        <begin position="9"/>
        <end position="244"/>
    </location>
</feature>
<feature type="binding site" evidence="1">
    <location>
        <position position="46"/>
    </location>
    <ligand>
        <name>ATP</name>
        <dbReference type="ChEBI" id="CHEBI:30616"/>
    </ligand>
</feature>
<feature type="binding site" evidence="1">
    <location>
        <begin position="53"/>
        <end position="55"/>
    </location>
    <ligand>
        <name>ATP</name>
        <dbReference type="ChEBI" id="CHEBI:30616"/>
    </ligand>
</feature>
<feature type="binding site" evidence="1">
    <location>
        <position position="99"/>
    </location>
    <ligand>
        <name>ATP</name>
        <dbReference type="ChEBI" id="CHEBI:30616"/>
    </ligand>
</feature>
<feature type="binding site" evidence="1">
    <location>
        <position position="102"/>
    </location>
    <ligand>
        <name>ATP</name>
        <dbReference type="ChEBI" id="CHEBI:30616"/>
    </ligand>
</feature>
<feature type="binding site" evidence="1">
    <location>
        <position position="107"/>
    </location>
    <ligand>
        <name>ATP</name>
        <dbReference type="ChEBI" id="CHEBI:30616"/>
    </ligand>
</feature>
<feature type="binding site" evidence="1">
    <location>
        <position position="199"/>
    </location>
    <ligand>
        <name>Mg(2+)</name>
        <dbReference type="ChEBI" id="CHEBI:18420"/>
    </ligand>
</feature>
<feature type="binding site" evidence="1">
    <location>
        <position position="213"/>
    </location>
    <ligand>
        <name>Mg(2+)</name>
        <dbReference type="ChEBI" id="CHEBI:18420"/>
    </ligand>
</feature>
<feature type="binding site" evidence="1">
    <location>
        <position position="264"/>
    </location>
    <ligand>
        <name>substrate</name>
        <note>ligand shared with subunit alpha</note>
    </ligand>
</feature>
<feature type="binding site" evidence="1">
    <location>
        <begin position="321"/>
        <end position="323"/>
    </location>
    <ligand>
        <name>substrate</name>
        <note>ligand shared with subunit alpha</note>
    </ligand>
</feature>
<accession>Q5QU21</accession>
<comment type="function">
    <text evidence="1">Succinyl-CoA synthetase functions in the citric acid cycle (TCA), coupling the hydrolysis of succinyl-CoA to the synthesis of either ATP or GTP and thus represents the only step of substrate-level phosphorylation in the TCA. The beta subunit provides nucleotide specificity of the enzyme and binds the substrate succinate, while the binding sites for coenzyme A and phosphate are found in the alpha subunit.</text>
</comment>
<comment type="catalytic activity">
    <reaction evidence="1">
        <text>succinate + ATP + CoA = succinyl-CoA + ADP + phosphate</text>
        <dbReference type="Rhea" id="RHEA:17661"/>
        <dbReference type="ChEBI" id="CHEBI:30031"/>
        <dbReference type="ChEBI" id="CHEBI:30616"/>
        <dbReference type="ChEBI" id="CHEBI:43474"/>
        <dbReference type="ChEBI" id="CHEBI:57287"/>
        <dbReference type="ChEBI" id="CHEBI:57292"/>
        <dbReference type="ChEBI" id="CHEBI:456216"/>
        <dbReference type="EC" id="6.2.1.5"/>
    </reaction>
    <physiologicalReaction direction="right-to-left" evidence="1">
        <dbReference type="Rhea" id="RHEA:17663"/>
    </physiologicalReaction>
</comment>
<comment type="catalytic activity">
    <reaction evidence="1">
        <text>GTP + succinate + CoA = succinyl-CoA + GDP + phosphate</text>
        <dbReference type="Rhea" id="RHEA:22120"/>
        <dbReference type="ChEBI" id="CHEBI:30031"/>
        <dbReference type="ChEBI" id="CHEBI:37565"/>
        <dbReference type="ChEBI" id="CHEBI:43474"/>
        <dbReference type="ChEBI" id="CHEBI:57287"/>
        <dbReference type="ChEBI" id="CHEBI:57292"/>
        <dbReference type="ChEBI" id="CHEBI:58189"/>
    </reaction>
    <physiologicalReaction direction="right-to-left" evidence="1">
        <dbReference type="Rhea" id="RHEA:22122"/>
    </physiologicalReaction>
</comment>
<comment type="cofactor">
    <cofactor evidence="1">
        <name>Mg(2+)</name>
        <dbReference type="ChEBI" id="CHEBI:18420"/>
    </cofactor>
    <text evidence="1">Binds 1 Mg(2+) ion per subunit.</text>
</comment>
<comment type="pathway">
    <text evidence="1">Carbohydrate metabolism; tricarboxylic acid cycle; succinate from succinyl-CoA (ligase route): step 1/1.</text>
</comment>
<comment type="subunit">
    <text evidence="1">Heterotetramer of two alpha and two beta subunits.</text>
</comment>
<comment type="similarity">
    <text evidence="1">Belongs to the succinate/malate CoA ligase beta subunit family.</text>
</comment>
<keyword id="KW-0067">ATP-binding</keyword>
<keyword id="KW-0436">Ligase</keyword>
<keyword id="KW-0460">Magnesium</keyword>
<keyword id="KW-0479">Metal-binding</keyword>
<keyword id="KW-0547">Nucleotide-binding</keyword>
<keyword id="KW-1185">Reference proteome</keyword>
<keyword id="KW-0816">Tricarboxylic acid cycle</keyword>
<protein>
    <recommendedName>
        <fullName evidence="1">Succinate--CoA ligase [ADP-forming] subunit beta</fullName>
        <ecNumber evidence="1">6.2.1.5</ecNumber>
    </recommendedName>
    <alternativeName>
        <fullName evidence="1">Succinyl-CoA synthetase subunit beta</fullName>
        <shortName evidence="1">SCS-beta</shortName>
    </alternativeName>
</protein>
<evidence type="ECO:0000255" key="1">
    <source>
        <dbReference type="HAMAP-Rule" id="MF_00558"/>
    </source>
</evidence>
<name>SUCC_IDILO</name>